<evidence type="ECO:0000255" key="1"/>
<evidence type="ECO:0000269" key="2">
    <source>
    </source>
</evidence>
<evidence type="ECO:0000305" key="3"/>
<keyword id="KW-1003">Cell membrane</keyword>
<keyword id="KW-0430">Lectin</keyword>
<keyword id="KW-0472">Membrane</keyword>
<keyword id="KW-1185">Reference proteome</keyword>
<keyword id="KW-0732">Signal</keyword>
<keyword id="KW-0812">Transmembrane</keyword>
<keyword id="KW-1133">Transmembrane helix</keyword>
<keyword id="KW-0843">Virulence</keyword>
<gene>
    <name type="ordered locus">BAB2_0505</name>
</gene>
<sequence length="147" mass="16823">MNSFRKTCAGALALIFGATSIVPTVAAPMNMDRPAINQNVIQARAHYRPQNYNRGHRPGYWHGHRGYRHYRHGYRRHNDGWWYPLAAFGAGAIIGGAISQPRPVYRAPAGSPHVQWCYSRYKSYRASDNTFQPYNGPRKQCRSPYSR</sequence>
<proteinExistence type="evidence at protein level"/>
<comment type="function">
    <text>Has immunoglobulin-binding and hemagglutination properties, and can bind to mannose. Essential for virulence. May be involved in LPS biosynthesis or polysaccharide transport.</text>
</comment>
<comment type="subcellular location">
    <subcellularLocation>
        <location evidence="3">Cell membrane</location>
        <topology evidence="3">Single-pass membrane protein</topology>
    </subcellularLocation>
</comment>
<comment type="disruption phenotype">
    <text evidence="2">Rough phenotype, with an aberrant O-antigen profile. Mutants exhibit a reduced ability to colonize mouse spleens but are still capable of producing a persistent infection, albeit with a low bacterial burden.</text>
</comment>
<comment type="miscellaneous">
    <text>Strongly immunoreactive, inducing both humoral and cellular immune responses in hosts during the course of infection.</text>
</comment>
<comment type="similarity">
    <text evidence="3">Belongs to the BA14k family.</text>
</comment>
<organism>
    <name type="scientific">Brucella abortus (strain 2308)</name>
    <dbReference type="NCBI Taxonomy" id="359391"/>
    <lineage>
        <taxon>Bacteria</taxon>
        <taxon>Pseudomonadati</taxon>
        <taxon>Pseudomonadota</taxon>
        <taxon>Alphaproteobacteria</taxon>
        <taxon>Hyphomicrobiales</taxon>
        <taxon>Brucellaceae</taxon>
        <taxon>Brucella/Ochrobactrum group</taxon>
        <taxon>Brucella</taxon>
    </lineage>
</organism>
<protein>
    <recommendedName>
        <fullName>Lectin-like protein BA14k</fullName>
    </recommendedName>
</protein>
<accession>Q2YKY9</accession>
<accession>Q44701</accession>
<accession>Q578L8</accession>
<feature type="signal peptide" evidence="1">
    <location>
        <begin position="1"/>
        <end position="26"/>
    </location>
</feature>
<feature type="chain" id="PRO_0000361296" description="Lectin-like protein BA14k">
    <location>
        <begin position="27"/>
        <end position="147"/>
    </location>
</feature>
<feature type="transmembrane region" description="Helical" evidence="1">
    <location>
        <begin position="80"/>
        <end position="100"/>
    </location>
</feature>
<name>14KL_BRUA2</name>
<reference key="1">
    <citation type="journal article" date="1998" name="Infect. Immun.">
        <title>Identification and characterization of a 14-kilodalton Brucella abortus protein reactive with antibodies from naturally and experimentally infected hosts and T lymphocytes from experimentally infected BALB/c mice.</title>
        <authorList>
            <person name="Chirhart-Gilleland R.L."/>
            <person name="Kovach M.E."/>
            <person name="Elzer P.H."/>
            <person name="Jennings S.R."/>
            <person name="Roop R.M. II"/>
        </authorList>
    </citation>
    <scope>NUCLEOTIDE SEQUENCE [GENOMIC DNA]</scope>
    <scope>IMMUNOGENICITY</scope>
</reference>
<reference key="2">
    <citation type="journal article" date="2005" name="Infect. Immun.">
        <title>Whole-genome analyses of speciation events in pathogenic Brucellae.</title>
        <authorList>
            <person name="Chain P.S."/>
            <person name="Comerci D.J."/>
            <person name="Tolmasky M.E."/>
            <person name="Larimer F.W."/>
            <person name="Malfatti S.A."/>
            <person name="Vergez L.M."/>
            <person name="Aguero F."/>
            <person name="Land M.L."/>
            <person name="Ugalde R.A."/>
            <person name="Garcia E."/>
        </authorList>
    </citation>
    <scope>NUCLEOTIDE SEQUENCE [LARGE SCALE GENOMIC DNA]</scope>
    <source>
        <strain>2308</strain>
    </source>
</reference>
<reference key="3">
    <citation type="journal article" date="2006" name="Infect. Immun.">
        <title>Role in virulence of a Brucella abortus protein exhibiting lectin-like activity.</title>
        <authorList>
            <person name="Vemulapalli T.H."/>
            <person name="Vemulapalli R."/>
            <person name="Schurig G.G."/>
            <person name="Boyle S.M."/>
            <person name="Sriranganathan N."/>
        </authorList>
    </citation>
    <scope>LECTIN-LIKE ACTIVITY</scope>
    <scope>POSSIBLE FUNCTION IN LPS SYNTHESIS</scope>
    <scope>DISRUPTION PHENOTYPE</scope>
</reference>
<dbReference type="EMBL" id="U62541">
    <property type="protein sequence ID" value="AAC31618.1"/>
    <property type="molecule type" value="Genomic_DNA"/>
</dbReference>
<dbReference type="EMBL" id="AM040265">
    <property type="protein sequence ID" value="CAJ12671.1"/>
    <property type="molecule type" value="Genomic_DNA"/>
</dbReference>
<dbReference type="RefSeq" id="WP_002965908.1">
    <property type="nucleotide sequence ID" value="NZ_KN046823.1"/>
</dbReference>
<dbReference type="STRING" id="359391.BAB2_0505"/>
<dbReference type="KEGG" id="bmf:BAB2_0505"/>
<dbReference type="PATRIC" id="fig|359391.11.peg.2695"/>
<dbReference type="HOGENOM" id="CLU_095992_0_0_5"/>
<dbReference type="PhylomeDB" id="Q2YKY9"/>
<dbReference type="Proteomes" id="UP000002719">
    <property type="component" value="Chromosome II"/>
</dbReference>
<dbReference type="GO" id="GO:0005886">
    <property type="term" value="C:plasma membrane"/>
    <property type="evidence" value="ECO:0007669"/>
    <property type="project" value="UniProtKB-SubCell"/>
</dbReference>
<dbReference type="GO" id="GO:0030246">
    <property type="term" value="F:carbohydrate binding"/>
    <property type="evidence" value="ECO:0007669"/>
    <property type="project" value="UniProtKB-KW"/>
</dbReference>
<dbReference type="InterPro" id="IPR012413">
    <property type="entry name" value="BA14K"/>
</dbReference>
<dbReference type="Pfam" id="PF07886">
    <property type="entry name" value="BA14K"/>
    <property type="match status" value="1"/>
</dbReference>